<protein>
    <recommendedName>
        <fullName evidence="1">Gamma-glutamyl phosphate reductase</fullName>
        <shortName evidence="1">GPR</shortName>
        <ecNumber evidence="1">1.2.1.41</ecNumber>
    </recommendedName>
    <alternativeName>
        <fullName evidence="1">Glutamate-5-semialdehyde dehydrogenase</fullName>
    </alternativeName>
    <alternativeName>
        <fullName evidence="1">Glutamyl-gamma-semialdehyde dehydrogenase</fullName>
        <shortName evidence="1">GSA dehydrogenase</shortName>
    </alternativeName>
</protein>
<reference key="1">
    <citation type="journal article" date="2000" name="Nature">
        <title>The genome sequence of the plant pathogen Xylella fastidiosa.</title>
        <authorList>
            <person name="Simpson A.J.G."/>
            <person name="Reinach F.C."/>
            <person name="Arruda P."/>
            <person name="Abreu F.A."/>
            <person name="Acencio M."/>
            <person name="Alvarenga R."/>
            <person name="Alves L.M.C."/>
            <person name="Araya J.E."/>
            <person name="Baia G.S."/>
            <person name="Baptista C.S."/>
            <person name="Barros M.H."/>
            <person name="Bonaccorsi E.D."/>
            <person name="Bordin S."/>
            <person name="Bove J.M."/>
            <person name="Briones M.R.S."/>
            <person name="Bueno M.R.P."/>
            <person name="Camargo A.A."/>
            <person name="Camargo L.E.A."/>
            <person name="Carraro D.M."/>
            <person name="Carrer H."/>
            <person name="Colauto N.B."/>
            <person name="Colombo C."/>
            <person name="Costa F.F."/>
            <person name="Costa M.C.R."/>
            <person name="Costa-Neto C.M."/>
            <person name="Coutinho L.L."/>
            <person name="Cristofani M."/>
            <person name="Dias-Neto E."/>
            <person name="Docena C."/>
            <person name="El-Dorry H."/>
            <person name="Facincani A.P."/>
            <person name="Ferreira A.J.S."/>
            <person name="Ferreira V.C.A."/>
            <person name="Ferro J.A."/>
            <person name="Fraga J.S."/>
            <person name="Franca S.C."/>
            <person name="Franco M.C."/>
            <person name="Frohme M."/>
            <person name="Furlan L.R."/>
            <person name="Garnier M."/>
            <person name="Goldman G.H."/>
            <person name="Goldman M.H.S."/>
            <person name="Gomes S.L."/>
            <person name="Gruber A."/>
            <person name="Ho P.L."/>
            <person name="Hoheisel J.D."/>
            <person name="Junqueira M.L."/>
            <person name="Kemper E.L."/>
            <person name="Kitajima J.P."/>
            <person name="Krieger J.E."/>
            <person name="Kuramae E.E."/>
            <person name="Laigret F."/>
            <person name="Lambais M.R."/>
            <person name="Leite L.C.C."/>
            <person name="Lemos E.G.M."/>
            <person name="Lemos M.V.F."/>
            <person name="Lopes S.A."/>
            <person name="Lopes C.R."/>
            <person name="Machado J.A."/>
            <person name="Machado M.A."/>
            <person name="Madeira A.M.B.N."/>
            <person name="Madeira H.M.F."/>
            <person name="Marino C.L."/>
            <person name="Marques M.V."/>
            <person name="Martins E.A.L."/>
            <person name="Martins E.M.F."/>
            <person name="Matsukuma A.Y."/>
            <person name="Menck C.F.M."/>
            <person name="Miracca E.C."/>
            <person name="Miyaki C.Y."/>
            <person name="Monteiro-Vitorello C.B."/>
            <person name="Moon D.H."/>
            <person name="Nagai M.A."/>
            <person name="Nascimento A.L.T.O."/>
            <person name="Netto L.E.S."/>
            <person name="Nhani A. Jr."/>
            <person name="Nobrega F.G."/>
            <person name="Nunes L.R."/>
            <person name="Oliveira M.A."/>
            <person name="de Oliveira M.C."/>
            <person name="de Oliveira R.C."/>
            <person name="Palmieri D.A."/>
            <person name="Paris A."/>
            <person name="Peixoto B.R."/>
            <person name="Pereira G.A.G."/>
            <person name="Pereira H.A. Jr."/>
            <person name="Pesquero J.B."/>
            <person name="Quaggio R.B."/>
            <person name="Roberto P.G."/>
            <person name="Rodrigues V."/>
            <person name="de Rosa A.J.M."/>
            <person name="de Rosa V.E. Jr."/>
            <person name="de Sa R.G."/>
            <person name="Santelli R.V."/>
            <person name="Sawasaki H.E."/>
            <person name="da Silva A.C.R."/>
            <person name="da Silva A.M."/>
            <person name="da Silva F.R."/>
            <person name="Silva W.A. Jr."/>
            <person name="da Silveira J.F."/>
            <person name="Silvestri M.L.Z."/>
            <person name="Siqueira W.J."/>
            <person name="de Souza A.A."/>
            <person name="de Souza A.P."/>
            <person name="Terenzi M.F."/>
            <person name="Truffi D."/>
            <person name="Tsai S.M."/>
            <person name="Tsuhako M.H."/>
            <person name="Vallada H."/>
            <person name="Van Sluys M.A."/>
            <person name="Verjovski-Almeida S."/>
            <person name="Vettore A.L."/>
            <person name="Zago M.A."/>
            <person name="Zatz M."/>
            <person name="Meidanis J."/>
            <person name="Setubal J.C."/>
        </authorList>
    </citation>
    <scope>NUCLEOTIDE SEQUENCE [LARGE SCALE GENOMIC DNA]</scope>
    <source>
        <strain>9a5c</strain>
    </source>
</reference>
<organism>
    <name type="scientific">Xylella fastidiosa (strain 9a5c)</name>
    <dbReference type="NCBI Taxonomy" id="160492"/>
    <lineage>
        <taxon>Bacteria</taxon>
        <taxon>Pseudomonadati</taxon>
        <taxon>Pseudomonadota</taxon>
        <taxon>Gammaproteobacteria</taxon>
        <taxon>Lysobacterales</taxon>
        <taxon>Lysobacteraceae</taxon>
        <taxon>Xylella</taxon>
    </lineage>
</organism>
<evidence type="ECO:0000255" key="1">
    <source>
        <dbReference type="HAMAP-Rule" id="MF_00412"/>
    </source>
</evidence>
<evidence type="ECO:0000305" key="2"/>
<proteinExistence type="inferred from homology"/>
<name>PROA_XYLFA</name>
<feature type="chain" id="PRO_0000189816" description="Gamma-glutamyl phosphate reductase">
    <location>
        <begin position="1"/>
        <end position="415"/>
    </location>
</feature>
<keyword id="KW-0028">Amino-acid biosynthesis</keyword>
<keyword id="KW-0963">Cytoplasm</keyword>
<keyword id="KW-0521">NADP</keyword>
<keyword id="KW-0560">Oxidoreductase</keyword>
<keyword id="KW-0641">Proline biosynthesis</keyword>
<comment type="function">
    <text evidence="1">Catalyzes the NADPH-dependent reduction of L-glutamate 5-phosphate into L-glutamate 5-semialdehyde and phosphate. The product spontaneously undergoes cyclization to form 1-pyrroline-5-carboxylate.</text>
</comment>
<comment type="catalytic activity">
    <reaction evidence="1">
        <text>L-glutamate 5-semialdehyde + phosphate + NADP(+) = L-glutamyl 5-phosphate + NADPH + H(+)</text>
        <dbReference type="Rhea" id="RHEA:19541"/>
        <dbReference type="ChEBI" id="CHEBI:15378"/>
        <dbReference type="ChEBI" id="CHEBI:43474"/>
        <dbReference type="ChEBI" id="CHEBI:57783"/>
        <dbReference type="ChEBI" id="CHEBI:58066"/>
        <dbReference type="ChEBI" id="CHEBI:58274"/>
        <dbReference type="ChEBI" id="CHEBI:58349"/>
        <dbReference type="EC" id="1.2.1.41"/>
    </reaction>
</comment>
<comment type="pathway">
    <text evidence="1">Amino-acid biosynthesis; L-proline biosynthesis; L-glutamate 5-semialdehyde from L-glutamate: step 2/2.</text>
</comment>
<comment type="subcellular location">
    <subcellularLocation>
        <location evidence="1">Cytoplasm</location>
    </subcellularLocation>
</comment>
<comment type="similarity">
    <text evidence="1">Belongs to the gamma-glutamyl phosphate reductase family.</text>
</comment>
<comment type="sequence caution" evidence="2">
    <conflict type="erroneous initiation">
        <sequence resource="EMBL-CDS" id="AAF83815"/>
    </conflict>
</comment>
<sequence>MSHIRHLAQQCRDAARRLATLSTDAKRRLLETMATALNTDAATILAANAADLDAARTQQVGTAMLDRLALDPQRLAAMADALRDIAALPDPVGQVTRDDQRPNGIHVQKIRVPLGVIAMIYEARPNVTADAAALCIKAGNGIILRGGSEAIRSNIAIATALQRALRLASLPETALILVQDMARHTMLELLQLSDLIDLVIPRGGEGLIRFVAEHARIPVIKHYKGVCHQFVDASADIEMAIRLLIDGKTTRPAACNALETLLVHTDIAPRFLPAAAAALRPYGVQLRGDHATCTLLPDVVLATDADYAAEYLDLILAIRIVPNVDAALEHIRRYGSDHTEVIVTADPAHADTFVQQLYSAVVMVNASSRFSDGGALGLGAEIGISTTRLHAYGPMGLDALTVERFVVRGQGQVRH</sequence>
<dbReference type="EC" id="1.2.1.41" evidence="1"/>
<dbReference type="EMBL" id="AE003849">
    <property type="protein sequence ID" value="AAF83815.1"/>
    <property type="status" value="ALT_INIT"/>
    <property type="molecule type" value="Genomic_DNA"/>
</dbReference>
<dbReference type="PIR" id="D82735">
    <property type="entry name" value="D82735"/>
</dbReference>
<dbReference type="RefSeq" id="WP_042463005.1">
    <property type="nucleotide sequence ID" value="NC_002488.3"/>
</dbReference>
<dbReference type="SMR" id="Q9PEM3"/>
<dbReference type="STRING" id="160492.XF_1005"/>
<dbReference type="KEGG" id="xfa:XF_1005"/>
<dbReference type="PATRIC" id="fig|160492.11.peg.1075"/>
<dbReference type="eggNOG" id="COG0014">
    <property type="taxonomic scope" value="Bacteria"/>
</dbReference>
<dbReference type="HOGENOM" id="CLU_030231_0_0_6"/>
<dbReference type="UniPathway" id="UPA00098">
    <property type="reaction ID" value="UER00360"/>
</dbReference>
<dbReference type="Proteomes" id="UP000000812">
    <property type="component" value="Chromosome"/>
</dbReference>
<dbReference type="GO" id="GO:0005737">
    <property type="term" value="C:cytoplasm"/>
    <property type="evidence" value="ECO:0007669"/>
    <property type="project" value="UniProtKB-SubCell"/>
</dbReference>
<dbReference type="GO" id="GO:0004350">
    <property type="term" value="F:glutamate-5-semialdehyde dehydrogenase activity"/>
    <property type="evidence" value="ECO:0007669"/>
    <property type="project" value="UniProtKB-UniRule"/>
</dbReference>
<dbReference type="GO" id="GO:0050661">
    <property type="term" value="F:NADP binding"/>
    <property type="evidence" value="ECO:0007669"/>
    <property type="project" value="InterPro"/>
</dbReference>
<dbReference type="GO" id="GO:0055129">
    <property type="term" value="P:L-proline biosynthetic process"/>
    <property type="evidence" value="ECO:0007669"/>
    <property type="project" value="UniProtKB-UniRule"/>
</dbReference>
<dbReference type="CDD" id="cd07079">
    <property type="entry name" value="ALDH_F18-19_ProA-GPR"/>
    <property type="match status" value="1"/>
</dbReference>
<dbReference type="FunFam" id="3.40.309.10:FF:000006">
    <property type="entry name" value="Gamma-glutamyl phosphate reductase"/>
    <property type="match status" value="1"/>
</dbReference>
<dbReference type="Gene3D" id="3.40.605.10">
    <property type="entry name" value="Aldehyde Dehydrogenase, Chain A, domain 1"/>
    <property type="match status" value="1"/>
</dbReference>
<dbReference type="Gene3D" id="3.40.309.10">
    <property type="entry name" value="Aldehyde Dehydrogenase, Chain A, domain 2"/>
    <property type="match status" value="1"/>
</dbReference>
<dbReference type="HAMAP" id="MF_00412">
    <property type="entry name" value="ProA"/>
    <property type="match status" value="1"/>
</dbReference>
<dbReference type="InterPro" id="IPR016161">
    <property type="entry name" value="Ald_DH/histidinol_DH"/>
</dbReference>
<dbReference type="InterPro" id="IPR016163">
    <property type="entry name" value="Ald_DH_C"/>
</dbReference>
<dbReference type="InterPro" id="IPR016162">
    <property type="entry name" value="Ald_DH_N"/>
</dbReference>
<dbReference type="InterPro" id="IPR015590">
    <property type="entry name" value="Aldehyde_DH_dom"/>
</dbReference>
<dbReference type="InterPro" id="IPR020593">
    <property type="entry name" value="G-glutamylP_reductase_CS"/>
</dbReference>
<dbReference type="InterPro" id="IPR012134">
    <property type="entry name" value="Glu-5-SA_DH"/>
</dbReference>
<dbReference type="InterPro" id="IPR000965">
    <property type="entry name" value="GPR_dom"/>
</dbReference>
<dbReference type="NCBIfam" id="NF001221">
    <property type="entry name" value="PRK00197.1"/>
    <property type="match status" value="1"/>
</dbReference>
<dbReference type="NCBIfam" id="TIGR00407">
    <property type="entry name" value="proA"/>
    <property type="match status" value="1"/>
</dbReference>
<dbReference type="PANTHER" id="PTHR11063:SF8">
    <property type="entry name" value="DELTA-1-PYRROLINE-5-CARBOXYLATE SYNTHASE"/>
    <property type="match status" value="1"/>
</dbReference>
<dbReference type="PANTHER" id="PTHR11063">
    <property type="entry name" value="GLUTAMATE SEMIALDEHYDE DEHYDROGENASE"/>
    <property type="match status" value="1"/>
</dbReference>
<dbReference type="Pfam" id="PF00171">
    <property type="entry name" value="Aldedh"/>
    <property type="match status" value="1"/>
</dbReference>
<dbReference type="PIRSF" id="PIRSF000151">
    <property type="entry name" value="GPR"/>
    <property type="match status" value="1"/>
</dbReference>
<dbReference type="SUPFAM" id="SSF53720">
    <property type="entry name" value="ALDH-like"/>
    <property type="match status" value="1"/>
</dbReference>
<dbReference type="PROSITE" id="PS01223">
    <property type="entry name" value="PROA"/>
    <property type="match status" value="1"/>
</dbReference>
<accession>Q9PEM3</accession>
<gene>
    <name evidence="1" type="primary">proA</name>
    <name type="ordered locus">XF_1005</name>
</gene>